<feature type="chain" id="PRO_1000077833" description="UvrABC system protein C">
    <location>
        <begin position="1"/>
        <end position="610"/>
    </location>
</feature>
<feature type="domain" description="GIY-YIG" evidence="1">
    <location>
        <begin position="16"/>
        <end position="94"/>
    </location>
</feature>
<feature type="domain" description="UVR" evidence="1">
    <location>
        <begin position="204"/>
        <end position="239"/>
    </location>
</feature>
<evidence type="ECO:0000255" key="1">
    <source>
        <dbReference type="HAMAP-Rule" id="MF_00203"/>
    </source>
</evidence>
<reference key="1">
    <citation type="submission" date="2007-09" db="EMBL/GenBank/DDBJ databases">
        <title>Complete sequence of chromosome of Serratia proteamaculans 568.</title>
        <authorList>
            <consortium name="US DOE Joint Genome Institute"/>
            <person name="Copeland A."/>
            <person name="Lucas S."/>
            <person name="Lapidus A."/>
            <person name="Barry K."/>
            <person name="Glavina del Rio T."/>
            <person name="Dalin E."/>
            <person name="Tice H."/>
            <person name="Pitluck S."/>
            <person name="Chain P."/>
            <person name="Malfatti S."/>
            <person name="Shin M."/>
            <person name="Vergez L."/>
            <person name="Schmutz J."/>
            <person name="Larimer F."/>
            <person name="Land M."/>
            <person name="Hauser L."/>
            <person name="Kyrpides N."/>
            <person name="Kim E."/>
            <person name="Taghavi S."/>
            <person name="Newman L."/>
            <person name="Vangronsveld J."/>
            <person name="van der Lelie D."/>
            <person name="Richardson P."/>
        </authorList>
    </citation>
    <scope>NUCLEOTIDE SEQUENCE [LARGE SCALE GENOMIC DNA]</scope>
    <source>
        <strain>568</strain>
    </source>
</reference>
<dbReference type="EMBL" id="CP000826">
    <property type="protein sequence ID" value="ABV40952.1"/>
    <property type="molecule type" value="Genomic_DNA"/>
</dbReference>
<dbReference type="SMR" id="A8GCW2"/>
<dbReference type="STRING" id="399741.Spro_1849"/>
<dbReference type="KEGG" id="spe:Spro_1849"/>
<dbReference type="eggNOG" id="COG0322">
    <property type="taxonomic scope" value="Bacteria"/>
</dbReference>
<dbReference type="HOGENOM" id="CLU_014841_3_2_6"/>
<dbReference type="OrthoDB" id="9804933at2"/>
<dbReference type="GO" id="GO:0005737">
    <property type="term" value="C:cytoplasm"/>
    <property type="evidence" value="ECO:0007669"/>
    <property type="project" value="UniProtKB-SubCell"/>
</dbReference>
<dbReference type="GO" id="GO:0009380">
    <property type="term" value="C:excinuclease repair complex"/>
    <property type="evidence" value="ECO:0007669"/>
    <property type="project" value="InterPro"/>
</dbReference>
<dbReference type="GO" id="GO:0003677">
    <property type="term" value="F:DNA binding"/>
    <property type="evidence" value="ECO:0007669"/>
    <property type="project" value="UniProtKB-UniRule"/>
</dbReference>
<dbReference type="GO" id="GO:0009381">
    <property type="term" value="F:excinuclease ABC activity"/>
    <property type="evidence" value="ECO:0007669"/>
    <property type="project" value="UniProtKB-UniRule"/>
</dbReference>
<dbReference type="GO" id="GO:0006289">
    <property type="term" value="P:nucleotide-excision repair"/>
    <property type="evidence" value="ECO:0007669"/>
    <property type="project" value="UniProtKB-UniRule"/>
</dbReference>
<dbReference type="GO" id="GO:0009432">
    <property type="term" value="P:SOS response"/>
    <property type="evidence" value="ECO:0007669"/>
    <property type="project" value="UniProtKB-UniRule"/>
</dbReference>
<dbReference type="CDD" id="cd10434">
    <property type="entry name" value="GIY-YIG_UvrC_Cho"/>
    <property type="match status" value="1"/>
</dbReference>
<dbReference type="FunFam" id="1.10.150.20:FF:000005">
    <property type="entry name" value="UvrABC system protein C"/>
    <property type="match status" value="1"/>
</dbReference>
<dbReference type="FunFam" id="3.30.420.340:FF:000001">
    <property type="entry name" value="UvrABC system protein C"/>
    <property type="match status" value="1"/>
</dbReference>
<dbReference type="FunFam" id="3.40.1440.10:FF:000001">
    <property type="entry name" value="UvrABC system protein C"/>
    <property type="match status" value="1"/>
</dbReference>
<dbReference type="FunFam" id="4.10.860.10:FF:000002">
    <property type="entry name" value="UvrABC system protein C"/>
    <property type="match status" value="1"/>
</dbReference>
<dbReference type="Gene3D" id="1.10.150.20">
    <property type="entry name" value="5' to 3' exonuclease, C-terminal subdomain"/>
    <property type="match status" value="1"/>
</dbReference>
<dbReference type="Gene3D" id="3.40.1440.10">
    <property type="entry name" value="GIY-YIG endonuclease"/>
    <property type="match status" value="1"/>
</dbReference>
<dbReference type="Gene3D" id="4.10.860.10">
    <property type="entry name" value="UVR domain"/>
    <property type="match status" value="1"/>
</dbReference>
<dbReference type="Gene3D" id="3.30.420.340">
    <property type="entry name" value="UvrC, RNAse H endonuclease domain"/>
    <property type="match status" value="1"/>
</dbReference>
<dbReference type="HAMAP" id="MF_00203">
    <property type="entry name" value="UvrC"/>
    <property type="match status" value="1"/>
</dbReference>
<dbReference type="InterPro" id="IPR000305">
    <property type="entry name" value="GIY-YIG_endonuc"/>
</dbReference>
<dbReference type="InterPro" id="IPR035901">
    <property type="entry name" value="GIY-YIG_endonuc_sf"/>
</dbReference>
<dbReference type="InterPro" id="IPR047296">
    <property type="entry name" value="GIY-YIG_UvrC_Cho"/>
</dbReference>
<dbReference type="InterPro" id="IPR003583">
    <property type="entry name" value="Hlx-hairpin-Hlx_DNA-bd_motif"/>
</dbReference>
<dbReference type="InterPro" id="IPR010994">
    <property type="entry name" value="RuvA_2-like"/>
</dbReference>
<dbReference type="InterPro" id="IPR001943">
    <property type="entry name" value="UVR_dom"/>
</dbReference>
<dbReference type="InterPro" id="IPR036876">
    <property type="entry name" value="UVR_dom_sf"/>
</dbReference>
<dbReference type="InterPro" id="IPR050066">
    <property type="entry name" value="UvrABC_protein_C"/>
</dbReference>
<dbReference type="InterPro" id="IPR004791">
    <property type="entry name" value="UvrC"/>
</dbReference>
<dbReference type="InterPro" id="IPR001162">
    <property type="entry name" value="UvrC_RNase_H_dom"/>
</dbReference>
<dbReference type="InterPro" id="IPR038476">
    <property type="entry name" value="UvrC_RNase_H_dom_sf"/>
</dbReference>
<dbReference type="NCBIfam" id="NF001824">
    <property type="entry name" value="PRK00558.1-5"/>
    <property type="match status" value="1"/>
</dbReference>
<dbReference type="NCBIfam" id="TIGR00194">
    <property type="entry name" value="uvrC"/>
    <property type="match status" value="1"/>
</dbReference>
<dbReference type="PANTHER" id="PTHR30562:SF1">
    <property type="entry name" value="UVRABC SYSTEM PROTEIN C"/>
    <property type="match status" value="1"/>
</dbReference>
<dbReference type="PANTHER" id="PTHR30562">
    <property type="entry name" value="UVRC/OXIDOREDUCTASE"/>
    <property type="match status" value="1"/>
</dbReference>
<dbReference type="Pfam" id="PF01541">
    <property type="entry name" value="GIY-YIG"/>
    <property type="match status" value="1"/>
</dbReference>
<dbReference type="Pfam" id="PF14520">
    <property type="entry name" value="HHH_5"/>
    <property type="match status" value="1"/>
</dbReference>
<dbReference type="Pfam" id="PF02151">
    <property type="entry name" value="UVR"/>
    <property type="match status" value="1"/>
</dbReference>
<dbReference type="Pfam" id="PF22920">
    <property type="entry name" value="UvrC_RNaseH"/>
    <property type="match status" value="1"/>
</dbReference>
<dbReference type="Pfam" id="PF08459">
    <property type="entry name" value="UvrC_RNaseH_dom"/>
    <property type="match status" value="1"/>
</dbReference>
<dbReference type="SMART" id="SM00465">
    <property type="entry name" value="GIYc"/>
    <property type="match status" value="1"/>
</dbReference>
<dbReference type="SMART" id="SM00278">
    <property type="entry name" value="HhH1"/>
    <property type="match status" value="2"/>
</dbReference>
<dbReference type="SUPFAM" id="SSF46600">
    <property type="entry name" value="C-terminal UvrC-binding domain of UvrB"/>
    <property type="match status" value="1"/>
</dbReference>
<dbReference type="SUPFAM" id="SSF82771">
    <property type="entry name" value="GIY-YIG endonuclease"/>
    <property type="match status" value="1"/>
</dbReference>
<dbReference type="SUPFAM" id="SSF47781">
    <property type="entry name" value="RuvA domain 2-like"/>
    <property type="match status" value="1"/>
</dbReference>
<dbReference type="PROSITE" id="PS50164">
    <property type="entry name" value="GIY_YIG"/>
    <property type="match status" value="1"/>
</dbReference>
<dbReference type="PROSITE" id="PS50151">
    <property type="entry name" value="UVR"/>
    <property type="match status" value="1"/>
</dbReference>
<dbReference type="PROSITE" id="PS50165">
    <property type="entry name" value="UVRC"/>
    <property type="match status" value="1"/>
</dbReference>
<gene>
    <name evidence="1" type="primary">uvrC</name>
    <name type="ordered locus">Spro_1849</name>
</gene>
<comment type="function">
    <text evidence="1">The UvrABC repair system catalyzes the recognition and processing of DNA lesions. UvrC both incises the 5' and 3' sides of the lesion. The N-terminal half is responsible for the 3' incision and the C-terminal half is responsible for the 5' incision.</text>
</comment>
<comment type="subunit">
    <text evidence="1">Interacts with UvrB in an incision complex.</text>
</comment>
<comment type="subcellular location">
    <subcellularLocation>
        <location evidence="1">Cytoplasm</location>
    </subcellularLocation>
</comment>
<comment type="similarity">
    <text evidence="1">Belongs to the UvrC family.</text>
</comment>
<sequence length="610" mass="68411">MSDRFDAKAFLSTVTSQPGVYRMYDATGTVIYVGKAKDLKKRLASYFRQQVGSRKTETLVKNIAQIDVTVTHTETEALLLEHNYIKLYQPRYNVLLRDDKSYPLIFLSADSHPRLAVHRGAKHAKGEYFGPFPNSYAVRETLALLQKLFPIRQCENSVYRNRSRPCLQYQIGRCLGPCVAGLVSEDEYRQQVDYVRLFLSGKDQQVLHQLIERMENASKALNFEEAARIRDQIQAVRRVTERQFVSGNSDDLDVIGVAFEAGMACLHVLFIRQGKVLGSRSYFPKVPGGTEMSEVVQTFVGQFYLQGSQMRTLPAEILLDFTLPEKELLAESLSELAGRKIQIQSKPRGDRARYLKLARTNAATALTTKLSQQSTIHQRLAELTKVLNLSEINRMECFDISHTMGEQTVASCVVFDANGPLRSEYRRYNITGITPGDDYAAMAQVLKRRYGKALEEKKIPDVIFIDGGKGQLGMAIDVFNSLNVSWDKNKPLLIGIAKGADRKAGLETLFFVPEGEGIALPSDSPALHVIQHIRDDSHNHAITGHRQRRAKVRNTSALELIDGVGPKRRQVLLKYMGGLQPLLNASVEEIAKVPGISQALAEKIYNALKH</sequence>
<name>UVRC_SERP5</name>
<proteinExistence type="inferred from homology"/>
<accession>A8GCW2</accession>
<organism>
    <name type="scientific">Serratia proteamaculans (strain 568)</name>
    <dbReference type="NCBI Taxonomy" id="399741"/>
    <lineage>
        <taxon>Bacteria</taxon>
        <taxon>Pseudomonadati</taxon>
        <taxon>Pseudomonadota</taxon>
        <taxon>Gammaproteobacteria</taxon>
        <taxon>Enterobacterales</taxon>
        <taxon>Yersiniaceae</taxon>
        <taxon>Serratia</taxon>
    </lineage>
</organism>
<protein>
    <recommendedName>
        <fullName evidence="1">UvrABC system protein C</fullName>
        <shortName evidence="1">Protein UvrC</shortName>
    </recommendedName>
    <alternativeName>
        <fullName evidence="1">Excinuclease ABC subunit C</fullName>
    </alternativeName>
</protein>
<keyword id="KW-0963">Cytoplasm</keyword>
<keyword id="KW-0227">DNA damage</keyword>
<keyword id="KW-0228">DNA excision</keyword>
<keyword id="KW-0234">DNA repair</keyword>
<keyword id="KW-0267">Excision nuclease</keyword>
<keyword id="KW-0742">SOS response</keyword>